<feature type="chain" id="PRO_0000265171" description="RNA-binding protein Hfq">
    <location>
        <begin position="1"/>
        <end position="83"/>
    </location>
</feature>
<feature type="domain" description="Sm" evidence="2">
    <location>
        <begin position="9"/>
        <end position="68"/>
    </location>
</feature>
<comment type="function">
    <text evidence="1">RNA chaperone that binds small regulatory RNA (sRNAs) and mRNAs to facilitate mRNA translational regulation in response to envelope stress, environmental stress and changes in metabolite concentrations. Also binds with high specificity to tRNAs.</text>
</comment>
<comment type="subunit">
    <text evidence="1">Homohexamer.</text>
</comment>
<comment type="similarity">
    <text evidence="1">Belongs to the Hfq family.</text>
</comment>
<sequence>MAKGQSLQDPFLNALRKERIPVSIYLVNGIKLQGQVESFDQFVILLKNTVSQMVYKHAISTVVPSRALPVAATNPHADADENQ</sequence>
<dbReference type="EMBL" id="CP000388">
    <property type="protein sequence ID" value="ABG42478.1"/>
    <property type="molecule type" value="Genomic_DNA"/>
</dbReference>
<dbReference type="RefSeq" id="WP_006994043.1">
    <property type="nucleotide sequence ID" value="NC_008228.1"/>
</dbReference>
<dbReference type="SMR" id="Q15NR0"/>
<dbReference type="STRING" id="342610.Patl_3978"/>
<dbReference type="KEGG" id="pat:Patl_3978"/>
<dbReference type="eggNOG" id="COG1923">
    <property type="taxonomic scope" value="Bacteria"/>
</dbReference>
<dbReference type="HOGENOM" id="CLU_113688_2_2_6"/>
<dbReference type="OrthoDB" id="9799751at2"/>
<dbReference type="Proteomes" id="UP000001981">
    <property type="component" value="Chromosome"/>
</dbReference>
<dbReference type="GO" id="GO:0005829">
    <property type="term" value="C:cytosol"/>
    <property type="evidence" value="ECO:0007669"/>
    <property type="project" value="TreeGrafter"/>
</dbReference>
<dbReference type="GO" id="GO:0003723">
    <property type="term" value="F:RNA binding"/>
    <property type="evidence" value="ECO:0007669"/>
    <property type="project" value="UniProtKB-UniRule"/>
</dbReference>
<dbReference type="GO" id="GO:0006355">
    <property type="term" value="P:regulation of DNA-templated transcription"/>
    <property type="evidence" value="ECO:0007669"/>
    <property type="project" value="InterPro"/>
</dbReference>
<dbReference type="GO" id="GO:0043487">
    <property type="term" value="P:regulation of RNA stability"/>
    <property type="evidence" value="ECO:0007669"/>
    <property type="project" value="TreeGrafter"/>
</dbReference>
<dbReference type="GO" id="GO:0045974">
    <property type="term" value="P:regulation of translation, ncRNA-mediated"/>
    <property type="evidence" value="ECO:0007669"/>
    <property type="project" value="TreeGrafter"/>
</dbReference>
<dbReference type="CDD" id="cd01716">
    <property type="entry name" value="Hfq"/>
    <property type="match status" value="1"/>
</dbReference>
<dbReference type="FunFam" id="2.30.30.100:FF:000001">
    <property type="entry name" value="RNA-binding protein Hfq"/>
    <property type="match status" value="1"/>
</dbReference>
<dbReference type="Gene3D" id="2.30.30.100">
    <property type="match status" value="1"/>
</dbReference>
<dbReference type="HAMAP" id="MF_00436">
    <property type="entry name" value="Hfq"/>
    <property type="match status" value="1"/>
</dbReference>
<dbReference type="InterPro" id="IPR005001">
    <property type="entry name" value="Hfq"/>
</dbReference>
<dbReference type="InterPro" id="IPR010920">
    <property type="entry name" value="LSM_dom_sf"/>
</dbReference>
<dbReference type="InterPro" id="IPR047575">
    <property type="entry name" value="Sm"/>
</dbReference>
<dbReference type="NCBIfam" id="TIGR02383">
    <property type="entry name" value="Hfq"/>
    <property type="match status" value="1"/>
</dbReference>
<dbReference type="NCBIfam" id="NF001602">
    <property type="entry name" value="PRK00395.1"/>
    <property type="match status" value="1"/>
</dbReference>
<dbReference type="PANTHER" id="PTHR34772">
    <property type="entry name" value="RNA-BINDING PROTEIN HFQ"/>
    <property type="match status" value="1"/>
</dbReference>
<dbReference type="PANTHER" id="PTHR34772:SF1">
    <property type="entry name" value="RNA-BINDING PROTEIN HFQ"/>
    <property type="match status" value="1"/>
</dbReference>
<dbReference type="Pfam" id="PF17209">
    <property type="entry name" value="Hfq"/>
    <property type="match status" value="1"/>
</dbReference>
<dbReference type="SUPFAM" id="SSF50182">
    <property type="entry name" value="Sm-like ribonucleoproteins"/>
    <property type="match status" value="1"/>
</dbReference>
<dbReference type="PROSITE" id="PS52002">
    <property type="entry name" value="SM"/>
    <property type="match status" value="1"/>
</dbReference>
<gene>
    <name evidence="1" type="primary">hfq</name>
    <name type="ordered locus">Patl_3978</name>
</gene>
<evidence type="ECO:0000255" key="1">
    <source>
        <dbReference type="HAMAP-Rule" id="MF_00436"/>
    </source>
</evidence>
<evidence type="ECO:0000255" key="2">
    <source>
        <dbReference type="PROSITE-ProRule" id="PRU01346"/>
    </source>
</evidence>
<reference key="1">
    <citation type="submission" date="2006-06" db="EMBL/GenBank/DDBJ databases">
        <title>Complete sequence of Pseudoalteromonas atlantica T6c.</title>
        <authorList>
            <consortium name="US DOE Joint Genome Institute"/>
            <person name="Copeland A."/>
            <person name="Lucas S."/>
            <person name="Lapidus A."/>
            <person name="Barry K."/>
            <person name="Detter J.C."/>
            <person name="Glavina del Rio T."/>
            <person name="Hammon N."/>
            <person name="Israni S."/>
            <person name="Dalin E."/>
            <person name="Tice H."/>
            <person name="Pitluck S."/>
            <person name="Saunders E."/>
            <person name="Brettin T."/>
            <person name="Bruce D."/>
            <person name="Han C."/>
            <person name="Tapia R."/>
            <person name="Gilna P."/>
            <person name="Schmutz J."/>
            <person name="Larimer F."/>
            <person name="Land M."/>
            <person name="Hauser L."/>
            <person name="Kyrpides N."/>
            <person name="Kim E."/>
            <person name="Karls A.C."/>
            <person name="Bartlett D."/>
            <person name="Higgins B.P."/>
            <person name="Richardson P."/>
        </authorList>
    </citation>
    <scope>NUCLEOTIDE SEQUENCE [LARGE SCALE GENOMIC DNA]</scope>
    <source>
        <strain>T6c / ATCC BAA-1087</strain>
    </source>
</reference>
<keyword id="KW-0694">RNA-binding</keyword>
<keyword id="KW-0346">Stress response</keyword>
<accession>Q15NR0</accession>
<protein>
    <recommendedName>
        <fullName evidence="1">RNA-binding protein Hfq</fullName>
    </recommendedName>
</protein>
<proteinExistence type="inferred from homology"/>
<organism>
    <name type="scientific">Pseudoalteromonas atlantica (strain T6c / ATCC BAA-1087)</name>
    <dbReference type="NCBI Taxonomy" id="3042615"/>
    <lineage>
        <taxon>Bacteria</taxon>
        <taxon>Pseudomonadati</taxon>
        <taxon>Pseudomonadota</taxon>
        <taxon>Gammaproteobacteria</taxon>
        <taxon>Alteromonadales</taxon>
        <taxon>Alteromonadaceae</taxon>
        <taxon>Paraglaciecola</taxon>
    </lineage>
</organism>
<name>HFQ_PSEA6</name>